<proteinExistence type="inferred from homology"/>
<name>VES_ECOL5</name>
<gene>
    <name evidence="1" type="primary">ves</name>
    <name type="ordered locus">ECP_1688</name>
</gene>
<reference key="1">
    <citation type="journal article" date="2006" name="Mol. Microbiol.">
        <title>Role of pathogenicity island-associated integrases in the genome plasticity of uropathogenic Escherichia coli strain 536.</title>
        <authorList>
            <person name="Hochhut B."/>
            <person name="Wilde C."/>
            <person name="Balling G."/>
            <person name="Middendorf B."/>
            <person name="Dobrindt U."/>
            <person name="Brzuszkiewicz E."/>
            <person name="Gottschalk G."/>
            <person name="Carniel E."/>
            <person name="Hacker J."/>
        </authorList>
    </citation>
    <scope>NUCLEOTIDE SEQUENCE [LARGE SCALE GENOMIC DNA]</scope>
    <source>
        <strain>536 / UPEC</strain>
    </source>
</reference>
<evidence type="ECO:0000255" key="1">
    <source>
        <dbReference type="HAMAP-Rule" id="MF_01591"/>
    </source>
</evidence>
<comment type="similarity">
    <text evidence="1">Belongs to the Ves family.</text>
</comment>
<organism>
    <name type="scientific">Escherichia coli O6:K15:H31 (strain 536 / UPEC)</name>
    <dbReference type="NCBI Taxonomy" id="362663"/>
    <lineage>
        <taxon>Bacteria</taxon>
        <taxon>Pseudomonadati</taxon>
        <taxon>Pseudomonadota</taxon>
        <taxon>Gammaproteobacteria</taxon>
        <taxon>Enterobacterales</taxon>
        <taxon>Enterobacteriaceae</taxon>
        <taxon>Escherichia</taxon>
    </lineage>
</organism>
<dbReference type="EMBL" id="CP000247">
    <property type="protein sequence ID" value="ABG69691.1"/>
    <property type="molecule type" value="Genomic_DNA"/>
</dbReference>
<dbReference type="RefSeq" id="WP_000455604.1">
    <property type="nucleotide sequence ID" value="NC_008253.1"/>
</dbReference>
<dbReference type="SMR" id="Q0TH88"/>
<dbReference type="KEGG" id="ecp:ECP_1688"/>
<dbReference type="HOGENOM" id="CLU_090931_5_0_6"/>
<dbReference type="Proteomes" id="UP000009182">
    <property type="component" value="Chromosome"/>
</dbReference>
<dbReference type="CDD" id="cd20293">
    <property type="entry name" value="cupin_HutD_N"/>
    <property type="match status" value="1"/>
</dbReference>
<dbReference type="Gene3D" id="2.60.120.10">
    <property type="entry name" value="Jelly Rolls"/>
    <property type="match status" value="1"/>
</dbReference>
<dbReference type="HAMAP" id="MF_01591">
    <property type="entry name" value="Ves"/>
    <property type="match status" value="1"/>
</dbReference>
<dbReference type="InterPro" id="IPR014710">
    <property type="entry name" value="RmlC-like_jellyroll"/>
</dbReference>
<dbReference type="InterPro" id="IPR011051">
    <property type="entry name" value="RmlC_Cupin_sf"/>
</dbReference>
<dbReference type="InterPro" id="IPR010282">
    <property type="entry name" value="Uncharacterised_HutD/Ves"/>
</dbReference>
<dbReference type="InterPro" id="IPR023482">
    <property type="entry name" value="Uncharacterised_Ves"/>
</dbReference>
<dbReference type="NCBIfam" id="NF008488">
    <property type="entry name" value="PRK11396.1"/>
    <property type="match status" value="1"/>
</dbReference>
<dbReference type="PANTHER" id="PTHR37943">
    <property type="entry name" value="PROTEIN VES"/>
    <property type="match status" value="1"/>
</dbReference>
<dbReference type="PANTHER" id="PTHR37943:SF1">
    <property type="entry name" value="PROTEIN VES"/>
    <property type="match status" value="1"/>
</dbReference>
<dbReference type="Pfam" id="PF05962">
    <property type="entry name" value="HutD"/>
    <property type="match status" value="1"/>
</dbReference>
<dbReference type="SUPFAM" id="SSF51182">
    <property type="entry name" value="RmlC-like cupins"/>
    <property type="match status" value="1"/>
</dbReference>
<accession>Q0TH88</accession>
<feature type="chain" id="PRO_0000315007" description="Protein Ves">
    <location>
        <begin position="1"/>
        <end position="191"/>
    </location>
</feature>
<protein>
    <recommendedName>
        <fullName evidence="1">Protein Ves</fullName>
    </recommendedName>
</protein>
<sequence length="191" mass="21608">MEYFDMRKMSVNLWRNAAGETREICTFPPAKRDFYWRASITSIAANGEFSLFPGMERIVTLLEGGEMFLESADRFNHTLKPLQPFSFAADLVVKAKLTAGQMSMDFNIMTRLDVCKAKVRIAERTFTTFGSRGGVVFVINGAWQLGDKLLTTDQGACWFDGRHTLRLLQPQGKLLFSEINWLAGHSPDQVQ</sequence>